<keyword id="KW-1043">Host membrane</keyword>
<keyword id="KW-0472">Membrane</keyword>
<keyword id="KW-1185">Reference proteome</keyword>
<keyword id="KW-0732">Signal</keyword>
<keyword id="KW-0812">Transmembrane</keyword>
<keyword id="KW-1133">Transmembrane helix</keyword>
<gene>
    <name type="ordered locus">Ba71V-087</name>
    <name type="ORF">B66L</name>
</gene>
<name>VFB66_ASFB7</name>
<reference key="1">
    <citation type="journal article" date="1995" name="Virology">
        <title>Analysis of the complete nucleotide sequence of African swine fever virus.</title>
        <authorList>
            <person name="Yanez R.J."/>
            <person name="Rodriguez J.M."/>
            <person name="Nogal M.L."/>
            <person name="Yuste L."/>
            <person name="Enriquez C."/>
            <person name="Rodriguez J.F."/>
            <person name="Vinuela E."/>
        </authorList>
    </citation>
    <scope>NUCLEOTIDE SEQUENCE [LARGE SCALE GENOMIC DNA]</scope>
</reference>
<sequence>MDIKRALILFLLFLVVLSNAFVDYIISNFNHAVTCRKPTYFGIVLQGIFLVILFSIVDYLINENIL</sequence>
<organismHost>
    <name type="scientific">Ornithodoros</name>
    <name type="common">relapsing fever ticks</name>
    <dbReference type="NCBI Taxonomy" id="6937"/>
</organismHost>
<organismHost>
    <name type="scientific">Sus scrofa</name>
    <name type="common">Pig</name>
    <dbReference type="NCBI Taxonomy" id="9823"/>
</organismHost>
<dbReference type="EMBL" id="U18466">
    <property type="protein sequence ID" value="AAA65317.1"/>
    <property type="molecule type" value="Genomic_DNA"/>
</dbReference>
<dbReference type="RefSeq" id="NP_042781.1">
    <property type="nucleotide sequence ID" value="NC_001659.2"/>
</dbReference>
<dbReference type="GeneID" id="22220317"/>
<dbReference type="KEGG" id="vg:22220317"/>
<dbReference type="Proteomes" id="UP000000624">
    <property type="component" value="Segment"/>
</dbReference>
<dbReference type="GO" id="GO:0033644">
    <property type="term" value="C:host cell membrane"/>
    <property type="evidence" value="ECO:0007669"/>
    <property type="project" value="UniProtKB-SubCell"/>
</dbReference>
<dbReference type="GO" id="GO:0016020">
    <property type="term" value="C:membrane"/>
    <property type="evidence" value="ECO:0007669"/>
    <property type="project" value="UniProtKB-KW"/>
</dbReference>
<proteinExistence type="inferred from homology"/>
<protein>
    <recommendedName>
        <fullName>Transmembrane protein B66L</fullName>
        <shortName>pB66L</shortName>
    </recommendedName>
</protein>
<comment type="subcellular location">
    <subcellularLocation>
        <location evidence="2">Host membrane</location>
        <topology evidence="2">Single-pass type I membrane protein</topology>
    </subcellularLocation>
</comment>
<comment type="similarity">
    <text evidence="2">Belongs to the asfivirus B66L family.</text>
</comment>
<organism>
    <name type="scientific">African swine fever virus (strain Badajoz 1971 Vero-adapted)</name>
    <name type="common">Ba71V</name>
    <name type="synonym">ASFV</name>
    <dbReference type="NCBI Taxonomy" id="10498"/>
    <lineage>
        <taxon>Viruses</taxon>
        <taxon>Varidnaviria</taxon>
        <taxon>Bamfordvirae</taxon>
        <taxon>Nucleocytoviricota</taxon>
        <taxon>Pokkesviricetes</taxon>
        <taxon>Asfuvirales</taxon>
        <taxon>Asfarviridae</taxon>
        <taxon>Asfivirus</taxon>
        <taxon>African swine fever virus</taxon>
    </lineage>
</organism>
<accession>Q65176</accession>
<evidence type="ECO:0000255" key="1"/>
<evidence type="ECO:0000305" key="2"/>
<feature type="signal peptide" evidence="1">
    <location>
        <begin position="1"/>
        <end position="20"/>
    </location>
</feature>
<feature type="chain" id="PRO_5000144427" description="Transmembrane protein B66L">
    <location>
        <begin position="21"/>
        <end position="66"/>
    </location>
</feature>
<feature type="topological domain" description="Extracellular" evidence="1">
    <location>
        <begin position="21"/>
        <end position="40"/>
    </location>
</feature>
<feature type="transmembrane region" description="Helical" evidence="1">
    <location>
        <begin position="41"/>
        <end position="61"/>
    </location>
</feature>
<feature type="topological domain" description="Cytoplasmic" evidence="1">
    <location>
        <begin position="62"/>
        <end position="66"/>
    </location>
</feature>